<proteinExistence type="inferred from homology"/>
<organism>
    <name type="scientific">Escherichia coli (strain 55989 / EAEC)</name>
    <dbReference type="NCBI Taxonomy" id="585055"/>
    <lineage>
        <taxon>Bacteria</taxon>
        <taxon>Pseudomonadati</taxon>
        <taxon>Pseudomonadota</taxon>
        <taxon>Gammaproteobacteria</taxon>
        <taxon>Enterobacterales</taxon>
        <taxon>Enterobacteriaceae</taxon>
        <taxon>Escherichia</taxon>
    </lineage>
</organism>
<dbReference type="EC" id="2.9.1.1" evidence="1"/>
<dbReference type="EMBL" id="CU928145">
    <property type="protein sequence ID" value="CAV00554.1"/>
    <property type="molecule type" value="Genomic_DNA"/>
</dbReference>
<dbReference type="RefSeq" id="WP_000206275.1">
    <property type="nucleotide sequence ID" value="NC_011748.1"/>
</dbReference>
<dbReference type="SMR" id="B7L708"/>
<dbReference type="GeneID" id="75204641"/>
<dbReference type="KEGG" id="eck:EC55989_4049"/>
<dbReference type="HOGENOM" id="CLU_038142_1_0_6"/>
<dbReference type="UniPathway" id="UPA00906">
    <property type="reaction ID" value="UER00896"/>
</dbReference>
<dbReference type="Proteomes" id="UP000000746">
    <property type="component" value="Chromosome"/>
</dbReference>
<dbReference type="GO" id="GO:0005737">
    <property type="term" value="C:cytoplasm"/>
    <property type="evidence" value="ECO:0007669"/>
    <property type="project" value="UniProtKB-SubCell"/>
</dbReference>
<dbReference type="GO" id="GO:0004125">
    <property type="term" value="F:L-seryl-tRNA(Sec) selenium transferase activity"/>
    <property type="evidence" value="ECO:0007669"/>
    <property type="project" value="UniProtKB-UniRule"/>
</dbReference>
<dbReference type="GO" id="GO:0001717">
    <property type="term" value="P:conversion of seryl-tRNAsec to selenocys-tRNAsec"/>
    <property type="evidence" value="ECO:0007669"/>
    <property type="project" value="UniProtKB-UniRule"/>
</dbReference>
<dbReference type="GO" id="GO:0001514">
    <property type="term" value="P:selenocysteine incorporation"/>
    <property type="evidence" value="ECO:0007669"/>
    <property type="project" value="UniProtKB-UniRule"/>
</dbReference>
<dbReference type="FunFam" id="3.40.640.10:FF:000028">
    <property type="entry name" value="L-seryl-tRNA(Sec) selenium transferase"/>
    <property type="match status" value="1"/>
</dbReference>
<dbReference type="FunFam" id="3.90.1150.180:FF:000001">
    <property type="entry name" value="L-seryl-tRNA(Sec) selenium transferase"/>
    <property type="match status" value="1"/>
</dbReference>
<dbReference type="Gene3D" id="3.90.1150.180">
    <property type="match status" value="1"/>
</dbReference>
<dbReference type="Gene3D" id="3.40.640.10">
    <property type="entry name" value="Type I PLP-dependent aspartate aminotransferase-like (Major domain)"/>
    <property type="match status" value="1"/>
</dbReference>
<dbReference type="HAMAP" id="MF_00423">
    <property type="entry name" value="SelA"/>
    <property type="match status" value="1"/>
</dbReference>
<dbReference type="InterPro" id="IPR015424">
    <property type="entry name" value="PyrdxlP-dep_Trfase"/>
</dbReference>
<dbReference type="InterPro" id="IPR015421">
    <property type="entry name" value="PyrdxlP-dep_Trfase_major"/>
</dbReference>
<dbReference type="InterPro" id="IPR018319">
    <property type="entry name" value="SelA-like"/>
</dbReference>
<dbReference type="InterPro" id="IPR004534">
    <property type="entry name" value="SelA_trans"/>
</dbReference>
<dbReference type="InterPro" id="IPR025862">
    <property type="entry name" value="SelA_trans_N_dom"/>
</dbReference>
<dbReference type="NCBIfam" id="TIGR00474">
    <property type="entry name" value="selA"/>
    <property type="match status" value="1"/>
</dbReference>
<dbReference type="PANTHER" id="PTHR32328">
    <property type="entry name" value="L-SERYL-TRNA(SEC) SELENIUM TRANSFERASE"/>
    <property type="match status" value="1"/>
</dbReference>
<dbReference type="PANTHER" id="PTHR32328:SF0">
    <property type="entry name" value="L-SERYL-TRNA(SEC) SELENIUM TRANSFERASE"/>
    <property type="match status" value="1"/>
</dbReference>
<dbReference type="Pfam" id="PF12390">
    <property type="entry name" value="Se-cys_synth_N"/>
    <property type="match status" value="1"/>
</dbReference>
<dbReference type="Pfam" id="PF03841">
    <property type="entry name" value="SelA"/>
    <property type="match status" value="1"/>
</dbReference>
<dbReference type="SUPFAM" id="SSF53383">
    <property type="entry name" value="PLP-dependent transferases"/>
    <property type="match status" value="1"/>
</dbReference>
<sequence length="463" mass="50607">MTTETRSLYSQLPAIDRLLRDSSFLSLRDTYGHTRVVELLRQMLDEAREVIRGSQTLPAWCENWAQEVDARLTKEAQSALRPVINLTGTVLHTNLGRALQAEAAVEAVAQAMRSPVTLEYDLDDAGRGHRDRALAQLLCRITGAEDACIVNNNAAAVLLMLAATASGKEVVVSRGELVEIGGAFRIPDVMRQAGCTLHEVGTTNRTHANDYRQAVNENTALLMKVHTSNYSIQGFTKAIDEAELVALGKELDVPVVTDLGSGSLVDLSQYGLPKEPMPQELIAAGVSLVSFSGDKLLGGPQAGIIVGKKEMIARLQSHPLKRALRADKMTLAALEATLRLYLHPEALSEKLPTLRLLTRSAEVIQIQAQRLQAPLAAHYGAEFAVQVMPCLSQIGSGSLPVDRLPSAALTFTPHDGRGSHLESLAARWRELPVPVIGRIYDGRLWLDLRCLEDEQRFLEMLLK</sequence>
<protein>
    <recommendedName>
        <fullName evidence="1">L-seryl-tRNA(Sec) selenium transferase</fullName>
        <ecNumber evidence="1">2.9.1.1</ecNumber>
    </recommendedName>
    <alternativeName>
        <fullName evidence="1">Selenocysteine synthase</fullName>
        <shortName evidence="1">Sec synthase</shortName>
    </alternativeName>
    <alternativeName>
        <fullName evidence="1">Selenocysteinyl-tRNA(Sec) synthase</fullName>
    </alternativeName>
</protein>
<evidence type="ECO:0000255" key="1">
    <source>
        <dbReference type="HAMAP-Rule" id="MF_00423"/>
    </source>
</evidence>
<comment type="function">
    <text evidence="1">Converts seryl-tRNA(Sec) to selenocysteinyl-tRNA(Sec) required for selenoprotein biosynthesis.</text>
</comment>
<comment type="catalytic activity">
    <reaction evidence="1">
        <text>L-seryl-tRNA(Sec) + selenophosphate + H(+) = L-selenocysteinyl-tRNA(Sec) + phosphate</text>
        <dbReference type="Rhea" id="RHEA:22728"/>
        <dbReference type="Rhea" id="RHEA-COMP:9742"/>
        <dbReference type="Rhea" id="RHEA-COMP:9743"/>
        <dbReference type="ChEBI" id="CHEBI:15378"/>
        <dbReference type="ChEBI" id="CHEBI:16144"/>
        <dbReference type="ChEBI" id="CHEBI:43474"/>
        <dbReference type="ChEBI" id="CHEBI:78533"/>
        <dbReference type="ChEBI" id="CHEBI:78573"/>
        <dbReference type="EC" id="2.9.1.1"/>
    </reaction>
</comment>
<comment type="cofactor">
    <cofactor evidence="1">
        <name>pyridoxal 5'-phosphate</name>
        <dbReference type="ChEBI" id="CHEBI:597326"/>
    </cofactor>
</comment>
<comment type="pathway">
    <text evidence="1">Aminoacyl-tRNA biosynthesis; selenocysteinyl-tRNA(Sec) biosynthesis; selenocysteinyl-tRNA(Sec) from L-seryl-tRNA(Sec) (bacterial route): step 1/1.</text>
</comment>
<comment type="subunit">
    <text evidence="1">Homodecamer; pentamer of dimers. Binds only one seryl-tRNA(Sec) per dimer.</text>
</comment>
<comment type="subcellular location">
    <subcellularLocation>
        <location evidence="1">Cytoplasm</location>
    </subcellularLocation>
</comment>
<comment type="similarity">
    <text evidence="1">Belongs to the SelA family.</text>
</comment>
<accession>B7L708</accession>
<gene>
    <name evidence="1" type="primary">selA</name>
    <name type="ordered locus">EC55989_4049</name>
</gene>
<feature type="chain" id="PRO_1000134922" description="L-seryl-tRNA(Sec) selenium transferase">
    <location>
        <begin position="1"/>
        <end position="463"/>
    </location>
</feature>
<feature type="modified residue" description="N6-(pyridoxal phosphate)lysine" evidence="1">
    <location>
        <position position="295"/>
    </location>
</feature>
<keyword id="KW-0963">Cytoplasm</keyword>
<keyword id="KW-0648">Protein biosynthesis</keyword>
<keyword id="KW-0663">Pyridoxal phosphate</keyword>
<keyword id="KW-1185">Reference proteome</keyword>
<keyword id="KW-0711">Selenium</keyword>
<keyword id="KW-0808">Transferase</keyword>
<reference key="1">
    <citation type="journal article" date="2009" name="PLoS Genet.">
        <title>Organised genome dynamics in the Escherichia coli species results in highly diverse adaptive paths.</title>
        <authorList>
            <person name="Touchon M."/>
            <person name="Hoede C."/>
            <person name="Tenaillon O."/>
            <person name="Barbe V."/>
            <person name="Baeriswyl S."/>
            <person name="Bidet P."/>
            <person name="Bingen E."/>
            <person name="Bonacorsi S."/>
            <person name="Bouchier C."/>
            <person name="Bouvet O."/>
            <person name="Calteau A."/>
            <person name="Chiapello H."/>
            <person name="Clermont O."/>
            <person name="Cruveiller S."/>
            <person name="Danchin A."/>
            <person name="Diard M."/>
            <person name="Dossat C."/>
            <person name="Karoui M.E."/>
            <person name="Frapy E."/>
            <person name="Garry L."/>
            <person name="Ghigo J.M."/>
            <person name="Gilles A.M."/>
            <person name="Johnson J."/>
            <person name="Le Bouguenec C."/>
            <person name="Lescat M."/>
            <person name="Mangenot S."/>
            <person name="Martinez-Jehanne V."/>
            <person name="Matic I."/>
            <person name="Nassif X."/>
            <person name="Oztas S."/>
            <person name="Petit M.A."/>
            <person name="Pichon C."/>
            <person name="Rouy Z."/>
            <person name="Ruf C.S."/>
            <person name="Schneider D."/>
            <person name="Tourret J."/>
            <person name="Vacherie B."/>
            <person name="Vallenet D."/>
            <person name="Medigue C."/>
            <person name="Rocha E.P.C."/>
            <person name="Denamur E."/>
        </authorList>
    </citation>
    <scope>NUCLEOTIDE SEQUENCE [LARGE SCALE GENOMIC DNA]</scope>
    <source>
        <strain>55989 / EAEC</strain>
    </source>
</reference>
<name>SELA_ECO55</name>